<accession>O14035</accession>
<gene>
    <name type="ORF">SPAC29B12.14c</name>
</gene>
<proteinExistence type="inferred from homology"/>
<organism>
    <name type="scientific">Schizosaccharomyces pombe (strain 972 / ATCC 24843)</name>
    <name type="common">Fission yeast</name>
    <dbReference type="NCBI Taxonomy" id="284812"/>
    <lineage>
        <taxon>Eukaryota</taxon>
        <taxon>Fungi</taxon>
        <taxon>Dikarya</taxon>
        <taxon>Ascomycota</taxon>
        <taxon>Taphrinomycotina</taxon>
        <taxon>Schizosaccharomycetes</taxon>
        <taxon>Schizosaccharomycetales</taxon>
        <taxon>Schizosaccharomycetaceae</taxon>
        <taxon>Schizosaccharomyces</taxon>
    </lineage>
</organism>
<comment type="subcellular location">
    <subcellularLocation>
        <location evidence="3">Cytoplasm</location>
    </subcellularLocation>
    <subcellularLocation>
        <location evidence="3">Nucleus</location>
    </subcellularLocation>
    <subcellularLocation>
        <location evidence="4">Membrane</location>
        <topology evidence="4">Multi-pass membrane protein</topology>
    </subcellularLocation>
</comment>
<comment type="similarity">
    <text evidence="4">Belongs to the purine-cytosine permease (2.A.39) family.</text>
</comment>
<feature type="chain" id="PRO_0000317319" description="Uncharacterized permease C29B12.14c">
    <location>
        <begin position="1"/>
        <end position="590"/>
    </location>
</feature>
<feature type="topological domain" description="Cytoplasmic" evidence="1">
    <location>
        <begin position="1"/>
        <end position="68"/>
    </location>
</feature>
<feature type="transmembrane region" description="Helical" evidence="1">
    <location>
        <begin position="69"/>
        <end position="89"/>
    </location>
</feature>
<feature type="topological domain" description="Extracellular" evidence="1">
    <location>
        <begin position="90"/>
        <end position="94"/>
    </location>
</feature>
<feature type="transmembrane region" description="Helical" evidence="1">
    <location>
        <begin position="95"/>
        <end position="115"/>
    </location>
</feature>
<feature type="topological domain" description="Cytoplasmic" evidence="1">
    <location>
        <begin position="116"/>
        <end position="124"/>
    </location>
</feature>
<feature type="transmembrane region" description="Helical" evidence="1">
    <location>
        <begin position="125"/>
        <end position="145"/>
    </location>
</feature>
<feature type="topological domain" description="Extracellular" evidence="1">
    <location>
        <begin position="146"/>
        <end position="149"/>
    </location>
</feature>
<feature type="transmembrane region" description="Helical" evidence="1">
    <location>
        <begin position="150"/>
        <end position="170"/>
    </location>
</feature>
<feature type="topological domain" description="Cytoplasmic" evidence="1">
    <location>
        <begin position="171"/>
        <end position="194"/>
    </location>
</feature>
<feature type="transmembrane region" description="Helical" evidence="1">
    <location>
        <begin position="195"/>
        <end position="215"/>
    </location>
</feature>
<feature type="topological domain" description="Extracellular" evidence="1">
    <location>
        <begin position="216"/>
        <end position="218"/>
    </location>
</feature>
<feature type="transmembrane region" description="Helical" evidence="1">
    <location>
        <begin position="219"/>
        <end position="239"/>
    </location>
</feature>
<feature type="topological domain" description="Cytoplasmic" evidence="1">
    <location>
        <begin position="240"/>
        <end position="258"/>
    </location>
</feature>
<feature type="transmembrane region" description="Helical" evidence="1">
    <location>
        <begin position="259"/>
        <end position="279"/>
    </location>
</feature>
<feature type="topological domain" description="Extracellular" evidence="1">
    <location>
        <begin position="280"/>
        <end position="298"/>
    </location>
</feature>
<feature type="transmembrane region" description="Helical" evidence="1">
    <location>
        <begin position="299"/>
        <end position="319"/>
    </location>
</feature>
<feature type="topological domain" description="Cytoplasmic" evidence="1">
    <location>
        <begin position="320"/>
        <end position="390"/>
    </location>
</feature>
<feature type="transmembrane region" description="Helical" evidence="1">
    <location>
        <begin position="391"/>
        <end position="411"/>
    </location>
</feature>
<feature type="topological domain" description="Extracellular" evidence="1">
    <location>
        <begin position="412"/>
        <end position="418"/>
    </location>
</feature>
<feature type="transmembrane region" description="Helical" evidence="1">
    <location>
        <begin position="419"/>
        <end position="439"/>
    </location>
</feature>
<feature type="topological domain" description="Cytoplasmic" evidence="1">
    <location>
        <begin position="440"/>
        <end position="467"/>
    </location>
</feature>
<feature type="transmembrane region" description="Helical" evidence="1">
    <location>
        <begin position="468"/>
        <end position="488"/>
    </location>
</feature>
<feature type="topological domain" description="Extracellular" evidence="1">
    <location>
        <begin position="489"/>
        <end position="500"/>
    </location>
</feature>
<feature type="transmembrane region" description="Helical" evidence="1">
    <location>
        <begin position="501"/>
        <end position="521"/>
    </location>
</feature>
<feature type="topological domain" description="Cytoplasmic" evidence="1">
    <location>
        <begin position="522"/>
        <end position="590"/>
    </location>
</feature>
<feature type="region of interest" description="Disordered" evidence="2">
    <location>
        <begin position="566"/>
        <end position="590"/>
    </location>
</feature>
<sequence>MKFSKPKFSMPKWRLTKEDFTPKGMWRNFKNFIVIEAKPGTTLAERFLTNEDLYPVPKSQRVWGPWNYVAFWLADSVNVNTWMIAGTAVESGLSWWEAWITVWVGYTIAAFILTIAGRAGAVYHISFPVLSRSSFGIWGSLWPILNRAVMACVWYGVQAWIGGECVTLMIRSIWPSFSHIPNTMAKSGTETYQWVGFFIFWLISNVAIWFPVYQIRHLFTAKSFLAPPAAIAFLIWALVKAHGAGDAIHAKTQLSTWNHGWAVTAGIISCLDNFATLIVNNPDFTRFATTPNAPIFPQLITIPMGFGITTLIGVLVGSASKSIYGENIWNPLDLLKSFLDHSNHHGVRAGVFFISTGLCLAQLGVNIAANTVSAGNDTSALCPMFINIRRGGYIASIIGICMCPWNLLSSSNSFANSLSAYAVFLSSFAGILIADYFVIRKGYLKVDALYTINPNEPYWFTYGINLRAFASYICGLLINVVGLAGAVGDKVPKAALTMNNIAYLLGIVTSFLSHLIICKIFPVTACGEKFLDERPEETDNYLLTLESTEDTISSYEETEGIPVKKVSYDSKEKSDDGKSGGIDIKESSVF</sequence>
<name>YEME_SCHPO</name>
<evidence type="ECO:0000255" key="1"/>
<evidence type="ECO:0000256" key="2">
    <source>
        <dbReference type="SAM" id="MobiDB-lite"/>
    </source>
</evidence>
<evidence type="ECO:0000269" key="3">
    <source>
    </source>
</evidence>
<evidence type="ECO:0000305" key="4"/>
<dbReference type="EMBL" id="CU329670">
    <property type="protein sequence ID" value="CAB16258.2"/>
    <property type="molecule type" value="Genomic_DNA"/>
</dbReference>
<dbReference type="PIR" id="T38501">
    <property type="entry name" value="T38501"/>
</dbReference>
<dbReference type="RefSeq" id="NP_594991.2">
    <property type="nucleotide sequence ID" value="NM_001020422.2"/>
</dbReference>
<dbReference type="SMR" id="O14035"/>
<dbReference type="BioGRID" id="278058">
    <property type="interactions" value="2"/>
</dbReference>
<dbReference type="FunCoup" id="O14035">
    <property type="interactions" value="375"/>
</dbReference>
<dbReference type="STRING" id="284812.O14035"/>
<dbReference type="iPTMnet" id="O14035"/>
<dbReference type="PaxDb" id="4896-SPAC29B12.14c.1"/>
<dbReference type="EnsemblFungi" id="SPAC29B12.14c.1">
    <property type="protein sequence ID" value="SPAC29B12.14c.1:pep"/>
    <property type="gene ID" value="SPAC29B12.14c"/>
</dbReference>
<dbReference type="KEGG" id="spo:2541559"/>
<dbReference type="PomBase" id="SPAC29B12.14c"/>
<dbReference type="VEuPathDB" id="FungiDB:SPAC29B12.14c"/>
<dbReference type="eggNOG" id="KOG2466">
    <property type="taxonomic scope" value="Eukaryota"/>
</dbReference>
<dbReference type="HOGENOM" id="CLU_021555_2_0_1"/>
<dbReference type="InParanoid" id="O14035"/>
<dbReference type="OMA" id="GWNWRAV"/>
<dbReference type="PRO" id="PR:O14035"/>
<dbReference type="Proteomes" id="UP000002485">
    <property type="component" value="Chromosome I"/>
</dbReference>
<dbReference type="GO" id="GO:0005737">
    <property type="term" value="C:cytoplasm"/>
    <property type="evidence" value="ECO:0007669"/>
    <property type="project" value="UniProtKB-SubCell"/>
</dbReference>
<dbReference type="GO" id="GO:0005634">
    <property type="term" value="C:nucleus"/>
    <property type="evidence" value="ECO:0007669"/>
    <property type="project" value="UniProtKB-SubCell"/>
</dbReference>
<dbReference type="GO" id="GO:0005886">
    <property type="term" value="C:plasma membrane"/>
    <property type="evidence" value="ECO:0000318"/>
    <property type="project" value="GO_Central"/>
</dbReference>
<dbReference type="GO" id="GO:0015205">
    <property type="term" value="F:nucleobase transmembrane transporter activity"/>
    <property type="evidence" value="ECO:0000318"/>
    <property type="project" value="GO_Central"/>
</dbReference>
<dbReference type="GO" id="GO:0015505">
    <property type="term" value="F:uracil:monoatomic cation symporter activity"/>
    <property type="evidence" value="ECO:0000266"/>
    <property type="project" value="PomBase"/>
</dbReference>
<dbReference type="GO" id="GO:0015851">
    <property type="term" value="P:nucleobase transport"/>
    <property type="evidence" value="ECO:0000318"/>
    <property type="project" value="GO_Central"/>
</dbReference>
<dbReference type="GO" id="GO:0098721">
    <property type="term" value="P:uracil import across plasma membrane"/>
    <property type="evidence" value="ECO:0000266"/>
    <property type="project" value="PomBase"/>
</dbReference>
<dbReference type="CDD" id="cd11482">
    <property type="entry name" value="SLC-NCS1sbd_NRT1-like"/>
    <property type="match status" value="1"/>
</dbReference>
<dbReference type="FunFam" id="1.10.4160.10:FF:000001">
    <property type="entry name" value="Uracil permease, putative"/>
    <property type="match status" value="1"/>
</dbReference>
<dbReference type="Gene3D" id="1.10.4160.10">
    <property type="entry name" value="Hydantoin permease"/>
    <property type="match status" value="1"/>
</dbReference>
<dbReference type="InterPro" id="IPR012681">
    <property type="entry name" value="NCS1"/>
</dbReference>
<dbReference type="InterPro" id="IPR001248">
    <property type="entry name" value="Pur-cyt_permease"/>
</dbReference>
<dbReference type="InterPro" id="IPR045225">
    <property type="entry name" value="Uracil/uridine/allantoin_perm"/>
</dbReference>
<dbReference type="NCBIfam" id="TIGR00800">
    <property type="entry name" value="ncs1"/>
    <property type="match status" value="1"/>
</dbReference>
<dbReference type="PANTHER" id="PTHR30618:SF2">
    <property type="entry name" value="ALLANTOIN PERMEASE-RELATED"/>
    <property type="match status" value="1"/>
</dbReference>
<dbReference type="PANTHER" id="PTHR30618">
    <property type="entry name" value="NCS1 FAMILY PURINE/PYRIMIDINE TRANSPORTER"/>
    <property type="match status" value="1"/>
</dbReference>
<dbReference type="Pfam" id="PF02133">
    <property type="entry name" value="Transp_cyt_pur"/>
    <property type="match status" value="1"/>
</dbReference>
<protein>
    <recommendedName>
        <fullName>Uncharacterized permease C29B12.14c</fullName>
    </recommendedName>
</protein>
<keyword id="KW-0963">Cytoplasm</keyword>
<keyword id="KW-0472">Membrane</keyword>
<keyword id="KW-0539">Nucleus</keyword>
<keyword id="KW-1185">Reference proteome</keyword>
<keyword id="KW-0812">Transmembrane</keyword>
<keyword id="KW-1133">Transmembrane helix</keyword>
<reference key="1">
    <citation type="journal article" date="2002" name="Nature">
        <title>The genome sequence of Schizosaccharomyces pombe.</title>
        <authorList>
            <person name="Wood V."/>
            <person name="Gwilliam R."/>
            <person name="Rajandream M.A."/>
            <person name="Lyne M.H."/>
            <person name="Lyne R."/>
            <person name="Stewart A."/>
            <person name="Sgouros J.G."/>
            <person name="Peat N."/>
            <person name="Hayles J."/>
            <person name="Baker S.G."/>
            <person name="Basham D."/>
            <person name="Bowman S."/>
            <person name="Brooks K."/>
            <person name="Brown D."/>
            <person name="Brown S."/>
            <person name="Chillingworth T."/>
            <person name="Churcher C.M."/>
            <person name="Collins M."/>
            <person name="Connor R."/>
            <person name="Cronin A."/>
            <person name="Davis P."/>
            <person name="Feltwell T."/>
            <person name="Fraser A."/>
            <person name="Gentles S."/>
            <person name="Goble A."/>
            <person name="Hamlin N."/>
            <person name="Harris D.E."/>
            <person name="Hidalgo J."/>
            <person name="Hodgson G."/>
            <person name="Holroyd S."/>
            <person name="Hornsby T."/>
            <person name="Howarth S."/>
            <person name="Huckle E.J."/>
            <person name="Hunt S."/>
            <person name="Jagels K."/>
            <person name="James K.D."/>
            <person name="Jones L."/>
            <person name="Jones M."/>
            <person name="Leather S."/>
            <person name="McDonald S."/>
            <person name="McLean J."/>
            <person name="Mooney P."/>
            <person name="Moule S."/>
            <person name="Mungall K.L."/>
            <person name="Murphy L.D."/>
            <person name="Niblett D."/>
            <person name="Odell C."/>
            <person name="Oliver K."/>
            <person name="O'Neil S."/>
            <person name="Pearson D."/>
            <person name="Quail M.A."/>
            <person name="Rabbinowitsch E."/>
            <person name="Rutherford K.M."/>
            <person name="Rutter S."/>
            <person name="Saunders D."/>
            <person name="Seeger K."/>
            <person name="Sharp S."/>
            <person name="Skelton J."/>
            <person name="Simmonds M.N."/>
            <person name="Squares R."/>
            <person name="Squares S."/>
            <person name="Stevens K."/>
            <person name="Taylor K."/>
            <person name="Taylor R.G."/>
            <person name="Tivey A."/>
            <person name="Walsh S.V."/>
            <person name="Warren T."/>
            <person name="Whitehead S."/>
            <person name="Woodward J.R."/>
            <person name="Volckaert G."/>
            <person name="Aert R."/>
            <person name="Robben J."/>
            <person name="Grymonprez B."/>
            <person name="Weltjens I."/>
            <person name="Vanstreels E."/>
            <person name="Rieger M."/>
            <person name="Schaefer M."/>
            <person name="Mueller-Auer S."/>
            <person name="Gabel C."/>
            <person name="Fuchs M."/>
            <person name="Duesterhoeft A."/>
            <person name="Fritzc C."/>
            <person name="Holzer E."/>
            <person name="Moestl D."/>
            <person name="Hilbert H."/>
            <person name="Borzym K."/>
            <person name="Langer I."/>
            <person name="Beck A."/>
            <person name="Lehrach H."/>
            <person name="Reinhardt R."/>
            <person name="Pohl T.M."/>
            <person name="Eger P."/>
            <person name="Zimmermann W."/>
            <person name="Wedler H."/>
            <person name="Wambutt R."/>
            <person name="Purnelle B."/>
            <person name="Goffeau A."/>
            <person name="Cadieu E."/>
            <person name="Dreano S."/>
            <person name="Gloux S."/>
            <person name="Lelaure V."/>
            <person name="Mottier S."/>
            <person name="Galibert F."/>
            <person name="Aves S.J."/>
            <person name="Xiang Z."/>
            <person name="Hunt C."/>
            <person name="Moore K."/>
            <person name="Hurst S.M."/>
            <person name="Lucas M."/>
            <person name="Rochet M."/>
            <person name="Gaillardin C."/>
            <person name="Tallada V.A."/>
            <person name="Garzon A."/>
            <person name="Thode G."/>
            <person name="Daga R.R."/>
            <person name="Cruzado L."/>
            <person name="Jimenez J."/>
            <person name="Sanchez M."/>
            <person name="del Rey F."/>
            <person name="Benito J."/>
            <person name="Dominguez A."/>
            <person name="Revuelta J.L."/>
            <person name="Moreno S."/>
            <person name="Armstrong J."/>
            <person name="Forsburg S.L."/>
            <person name="Cerutti L."/>
            <person name="Lowe T."/>
            <person name="McCombie W.R."/>
            <person name="Paulsen I."/>
            <person name="Potashkin J."/>
            <person name="Shpakovski G.V."/>
            <person name="Ussery D."/>
            <person name="Barrell B.G."/>
            <person name="Nurse P."/>
        </authorList>
    </citation>
    <scope>NUCLEOTIDE SEQUENCE [LARGE SCALE GENOMIC DNA]</scope>
    <source>
        <strain>972 / ATCC 24843</strain>
    </source>
</reference>
<reference key="2">
    <citation type="journal article" date="2011" name="Science">
        <title>Comparative functional genomics of the fission yeasts.</title>
        <authorList>
            <person name="Rhind N."/>
            <person name="Chen Z."/>
            <person name="Yassour M."/>
            <person name="Thompson D.A."/>
            <person name="Haas B.J."/>
            <person name="Habib N."/>
            <person name="Wapinski I."/>
            <person name="Roy S."/>
            <person name="Lin M.F."/>
            <person name="Heiman D.I."/>
            <person name="Young S.K."/>
            <person name="Furuya K."/>
            <person name="Guo Y."/>
            <person name="Pidoux A."/>
            <person name="Chen H.M."/>
            <person name="Robbertse B."/>
            <person name="Goldberg J.M."/>
            <person name="Aoki K."/>
            <person name="Bayne E.H."/>
            <person name="Berlin A.M."/>
            <person name="Desjardins C.A."/>
            <person name="Dobbs E."/>
            <person name="Dukaj L."/>
            <person name="Fan L."/>
            <person name="FitzGerald M.G."/>
            <person name="French C."/>
            <person name="Gujja S."/>
            <person name="Hansen K."/>
            <person name="Keifenheim D."/>
            <person name="Levin J.Z."/>
            <person name="Mosher R.A."/>
            <person name="Mueller C.A."/>
            <person name="Pfiffner J."/>
            <person name="Priest M."/>
            <person name="Russ C."/>
            <person name="Smialowska A."/>
            <person name="Swoboda P."/>
            <person name="Sykes S.M."/>
            <person name="Vaughn M."/>
            <person name="Vengrova S."/>
            <person name="Yoder R."/>
            <person name="Zeng Q."/>
            <person name="Allshire R."/>
            <person name="Baulcombe D."/>
            <person name="Birren B.W."/>
            <person name="Brown W."/>
            <person name="Ekwall K."/>
            <person name="Kellis M."/>
            <person name="Leatherwood J."/>
            <person name="Levin H."/>
            <person name="Margalit H."/>
            <person name="Martienssen R."/>
            <person name="Nieduszynski C.A."/>
            <person name="Spatafora J.W."/>
            <person name="Friedman N."/>
            <person name="Dalgaard J.Z."/>
            <person name="Baumann P."/>
            <person name="Niki H."/>
            <person name="Regev A."/>
            <person name="Nusbaum C."/>
        </authorList>
    </citation>
    <scope>REVISION OF GENE MODEL</scope>
</reference>
<reference key="3">
    <citation type="journal article" date="2006" name="Nat. Biotechnol.">
        <title>ORFeome cloning and global analysis of protein localization in the fission yeast Schizosaccharomyces pombe.</title>
        <authorList>
            <person name="Matsuyama A."/>
            <person name="Arai R."/>
            <person name="Yashiroda Y."/>
            <person name="Shirai A."/>
            <person name="Kamata A."/>
            <person name="Sekido S."/>
            <person name="Kobayashi Y."/>
            <person name="Hashimoto A."/>
            <person name="Hamamoto M."/>
            <person name="Hiraoka Y."/>
            <person name="Horinouchi S."/>
            <person name="Yoshida M."/>
        </authorList>
    </citation>
    <scope>SUBCELLULAR LOCATION [LARGE SCALE ANALYSIS]</scope>
</reference>